<feature type="chain" id="PRO_0000095139" description="Adenylosuccinate synthetase">
    <location>
        <begin position="1" status="less than"/>
        <end position="259"/>
    </location>
</feature>
<feature type="active site" description="Proton acceptor" evidence="1">
    <location>
        <position position="4"/>
    </location>
</feature>
<feature type="active site" description="Proton donor" evidence="1">
    <location>
        <position position="32"/>
    </location>
</feature>
<feature type="binding site" evidence="1">
    <location>
        <begin position="3"/>
        <end position="9"/>
    </location>
    <ligand>
        <name>GTP</name>
        <dbReference type="ChEBI" id="CHEBI:37565"/>
    </ligand>
</feature>
<feature type="binding site" description="in other chain" evidence="1">
    <location>
        <begin position="4"/>
        <end position="7"/>
    </location>
    <ligand>
        <name>IMP</name>
        <dbReference type="ChEBI" id="CHEBI:58053"/>
        <note>ligand shared between dimeric partners</note>
    </ligand>
</feature>
<feature type="binding site" evidence="1">
    <location>
        <position position="4"/>
    </location>
    <ligand>
        <name>Mg(2+)</name>
        <dbReference type="ChEBI" id="CHEBI:18420"/>
    </ligand>
</feature>
<feature type="binding site" evidence="1">
    <location>
        <begin position="31"/>
        <end position="33"/>
    </location>
    <ligand>
        <name>GTP</name>
        <dbReference type="ChEBI" id="CHEBI:37565"/>
    </ligand>
</feature>
<feature type="binding site" evidence="1">
    <location>
        <position position="31"/>
    </location>
    <ligand>
        <name>Mg(2+)</name>
        <dbReference type="ChEBI" id="CHEBI:18420"/>
    </ligand>
</feature>
<feature type="binding site" description="in other chain" evidence="1">
    <location>
        <position position="120"/>
    </location>
    <ligand>
        <name>IMP</name>
        <dbReference type="ChEBI" id="CHEBI:58053"/>
        <note>ligand shared between dimeric partners</note>
    </ligand>
</feature>
<feature type="binding site" evidence="1">
    <location>
        <position position="134"/>
    </location>
    <ligand>
        <name>IMP</name>
        <dbReference type="ChEBI" id="CHEBI:58053"/>
        <note>ligand shared between dimeric partners</note>
    </ligand>
</feature>
<feature type="binding site" description="in other chain" evidence="1">
    <location>
        <position position="215"/>
    </location>
    <ligand>
        <name>IMP</name>
        <dbReference type="ChEBI" id="CHEBI:58053"/>
        <note>ligand shared between dimeric partners</note>
    </ligand>
</feature>
<feature type="binding site" description="in other chain" evidence="1">
    <location>
        <position position="230"/>
    </location>
    <ligand>
        <name>IMP</name>
        <dbReference type="ChEBI" id="CHEBI:58053"/>
        <note>ligand shared between dimeric partners</note>
    </ligand>
</feature>
<feature type="non-terminal residue">
    <location>
        <position position="1"/>
    </location>
</feature>
<reference key="1">
    <citation type="journal article" date="1998" name="FEMS Microbiol. Lett.">
        <title>Codon usage in Actinobacillus actinomycetemcomitans.</title>
        <authorList>
            <person name="Kaplan J.B."/>
            <person name="Fine D.H."/>
        </authorList>
    </citation>
    <scope>NUCLEOTIDE SEQUENCE [GENOMIC DNA]</scope>
    <source>
        <strain>CU1000</strain>
    </source>
</reference>
<protein>
    <recommendedName>
        <fullName evidence="1">Adenylosuccinate synthetase</fullName>
        <shortName evidence="1">AMPSase</shortName>
        <shortName evidence="1">AdSS</shortName>
        <ecNumber evidence="1">6.3.4.4</ecNumber>
    </recommendedName>
    <alternativeName>
        <fullName evidence="1">IMP--aspartate ligase</fullName>
    </alternativeName>
</protein>
<proteinExistence type="inferred from homology"/>
<keyword id="KW-0963">Cytoplasm</keyword>
<keyword id="KW-0342">GTP-binding</keyword>
<keyword id="KW-0436">Ligase</keyword>
<keyword id="KW-0460">Magnesium</keyword>
<keyword id="KW-0479">Metal-binding</keyword>
<keyword id="KW-0547">Nucleotide-binding</keyword>
<keyword id="KW-0658">Purine biosynthesis</keyword>
<dbReference type="EC" id="6.3.4.4" evidence="1"/>
<dbReference type="EMBL" id="U89525">
    <property type="protein sequence ID" value="AAC46412.1"/>
    <property type="molecule type" value="Genomic_DNA"/>
</dbReference>
<dbReference type="SMR" id="P96771"/>
<dbReference type="STRING" id="714.ACT75_02600"/>
<dbReference type="eggNOG" id="COG0104">
    <property type="taxonomic scope" value="Bacteria"/>
</dbReference>
<dbReference type="UniPathway" id="UPA00075">
    <property type="reaction ID" value="UER00335"/>
</dbReference>
<dbReference type="GO" id="GO:0005737">
    <property type="term" value="C:cytoplasm"/>
    <property type="evidence" value="ECO:0007669"/>
    <property type="project" value="UniProtKB-SubCell"/>
</dbReference>
<dbReference type="GO" id="GO:0004019">
    <property type="term" value="F:adenylosuccinate synthase activity"/>
    <property type="evidence" value="ECO:0007669"/>
    <property type="project" value="UniProtKB-EC"/>
</dbReference>
<dbReference type="GO" id="GO:0005525">
    <property type="term" value="F:GTP binding"/>
    <property type="evidence" value="ECO:0007669"/>
    <property type="project" value="UniProtKB-KW"/>
</dbReference>
<dbReference type="GO" id="GO:0046872">
    <property type="term" value="F:metal ion binding"/>
    <property type="evidence" value="ECO:0007669"/>
    <property type="project" value="UniProtKB-KW"/>
</dbReference>
<dbReference type="GO" id="GO:0044208">
    <property type="term" value="P:'de novo' AMP biosynthetic process"/>
    <property type="evidence" value="ECO:0007669"/>
    <property type="project" value="UniProtKB-UniPathway"/>
</dbReference>
<dbReference type="GO" id="GO:0046040">
    <property type="term" value="P:IMP metabolic process"/>
    <property type="evidence" value="ECO:0007669"/>
    <property type="project" value="TreeGrafter"/>
</dbReference>
<dbReference type="FunFam" id="1.10.300.10:FF:000001">
    <property type="entry name" value="Adenylosuccinate synthetase"/>
    <property type="match status" value="1"/>
</dbReference>
<dbReference type="Gene3D" id="3.40.440.10">
    <property type="entry name" value="Adenylosuccinate Synthetase, subunit A, domain 1"/>
    <property type="match status" value="1"/>
</dbReference>
<dbReference type="Gene3D" id="1.10.300.10">
    <property type="entry name" value="Adenylosuccinate Synthetase, subunit A, domain 2"/>
    <property type="match status" value="1"/>
</dbReference>
<dbReference type="HAMAP" id="MF_00011">
    <property type="entry name" value="Adenylosucc_synth"/>
    <property type="match status" value="1"/>
</dbReference>
<dbReference type="InterPro" id="IPR018220">
    <property type="entry name" value="Adenylosuccin_syn_GTP-bd"/>
</dbReference>
<dbReference type="InterPro" id="IPR033128">
    <property type="entry name" value="Adenylosuccin_syn_Lys_AS"/>
</dbReference>
<dbReference type="InterPro" id="IPR042109">
    <property type="entry name" value="Adenylosuccinate_synth_dom1"/>
</dbReference>
<dbReference type="InterPro" id="IPR042110">
    <property type="entry name" value="Adenylosuccinate_synth_dom2"/>
</dbReference>
<dbReference type="InterPro" id="IPR001114">
    <property type="entry name" value="Adenylosuccinate_synthetase"/>
</dbReference>
<dbReference type="InterPro" id="IPR027417">
    <property type="entry name" value="P-loop_NTPase"/>
</dbReference>
<dbReference type="PANTHER" id="PTHR11846">
    <property type="entry name" value="ADENYLOSUCCINATE SYNTHETASE"/>
    <property type="match status" value="1"/>
</dbReference>
<dbReference type="PANTHER" id="PTHR11846:SF0">
    <property type="entry name" value="ADENYLOSUCCINATE SYNTHETASE"/>
    <property type="match status" value="1"/>
</dbReference>
<dbReference type="Pfam" id="PF00709">
    <property type="entry name" value="Adenylsucc_synt"/>
    <property type="match status" value="1"/>
</dbReference>
<dbReference type="SMART" id="SM00788">
    <property type="entry name" value="Adenylsucc_synt"/>
    <property type="match status" value="1"/>
</dbReference>
<dbReference type="SUPFAM" id="SSF52540">
    <property type="entry name" value="P-loop containing nucleoside triphosphate hydrolases"/>
    <property type="match status" value="1"/>
</dbReference>
<dbReference type="PROSITE" id="PS01266">
    <property type="entry name" value="ADENYLOSUCCIN_SYN_1"/>
    <property type="match status" value="1"/>
</dbReference>
<dbReference type="PROSITE" id="PS00513">
    <property type="entry name" value="ADENYLOSUCCIN_SYN_2"/>
    <property type="match status" value="1"/>
</dbReference>
<sequence length="259" mass="28479">QWGDEGKGKIVDLLTDRVKYVVRYQGGRGAGHTLILNGEKTVLRLIPSGILRDNVTCLIGNGVVLSPAALMQEMSELENRGVNVRDRLLISEACPLILPYHVAMDHAREARWAKRPIRATGRGIGPAYEDKVARRGLRVGDLFDRAAFAEKLKNILDYYNFQLVNYYKVEPVDYQKTLDDVFAVADIITGMVADITTILDTARKNGDNILFEGAQGTMLDIDHGTYPYVTSSNTAGGVASGSGFGPRNLDYVLGIIKAY</sequence>
<gene>
    <name evidence="1" type="primary">purA</name>
</gene>
<organism>
    <name type="scientific">Aggregatibacter actinomycetemcomitans</name>
    <name type="common">Actinobacillus actinomycetemcomitans</name>
    <name type="synonym">Haemophilus actinomycetemcomitans</name>
    <dbReference type="NCBI Taxonomy" id="714"/>
    <lineage>
        <taxon>Bacteria</taxon>
        <taxon>Pseudomonadati</taxon>
        <taxon>Pseudomonadota</taxon>
        <taxon>Gammaproteobacteria</taxon>
        <taxon>Pasteurellales</taxon>
        <taxon>Pasteurellaceae</taxon>
        <taxon>Aggregatibacter</taxon>
    </lineage>
</organism>
<name>PURA_AGGAC</name>
<evidence type="ECO:0000255" key="1">
    <source>
        <dbReference type="HAMAP-Rule" id="MF_00011"/>
    </source>
</evidence>
<accession>P96771</accession>
<comment type="function">
    <text evidence="1">Plays an important role in the de novo pathway of purine nucleotide biosynthesis. Catalyzes the first committed step in the biosynthesis of AMP from IMP.</text>
</comment>
<comment type="catalytic activity">
    <reaction evidence="1">
        <text>IMP + L-aspartate + GTP = N(6)-(1,2-dicarboxyethyl)-AMP + GDP + phosphate + 2 H(+)</text>
        <dbReference type="Rhea" id="RHEA:15753"/>
        <dbReference type="ChEBI" id="CHEBI:15378"/>
        <dbReference type="ChEBI" id="CHEBI:29991"/>
        <dbReference type="ChEBI" id="CHEBI:37565"/>
        <dbReference type="ChEBI" id="CHEBI:43474"/>
        <dbReference type="ChEBI" id="CHEBI:57567"/>
        <dbReference type="ChEBI" id="CHEBI:58053"/>
        <dbReference type="ChEBI" id="CHEBI:58189"/>
        <dbReference type="EC" id="6.3.4.4"/>
    </reaction>
</comment>
<comment type="cofactor">
    <cofactor evidence="1">
        <name>Mg(2+)</name>
        <dbReference type="ChEBI" id="CHEBI:18420"/>
    </cofactor>
    <text evidence="1">Binds 1 Mg(2+) ion per subunit.</text>
</comment>
<comment type="pathway">
    <text evidence="1">Purine metabolism; AMP biosynthesis via de novo pathway; AMP from IMP: step 1/2.</text>
</comment>
<comment type="subunit">
    <text evidence="1">Homodimer.</text>
</comment>
<comment type="subcellular location">
    <subcellularLocation>
        <location evidence="1">Cytoplasm</location>
    </subcellularLocation>
</comment>
<comment type="similarity">
    <text evidence="1">Belongs to the adenylosuccinate synthetase family.</text>
</comment>